<comment type="function">
    <text evidence="1">Facilitates the functional incorporation of the urease nickel metallocenter. This process requires GTP hydrolysis, probably effectuated by UreG.</text>
</comment>
<comment type="subunit">
    <text evidence="1">Homodimer. UreD, UreF and UreG form a complex that acts as a GTP-hydrolysis-dependent molecular chaperone, activating the urease apoprotein by helping to assemble the nickel containing metallocenter of UreC. The UreE protein probably delivers the nickel.</text>
</comment>
<comment type="subcellular location">
    <subcellularLocation>
        <location evidence="1">Cytoplasm</location>
    </subcellularLocation>
</comment>
<comment type="similarity">
    <text evidence="1">Belongs to the SIMIBI class G3E GTPase family. UreG subfamily.</text>
</comment>
<evidence type="ECO:0000255" key="1">
    <source>
        <dbReference type="HAMAP-Rule" id="MF_01389"/>
    </source>
</evidence>
<evidence type="ECO:0000256" key="2">
    <source>
        <dbReference type="SAM" id="MobiDB-lite"/>
    </source>
</evidence>
<name>UREG_MYCBT</name>
<accession>C1APC9</accession>
<reference key="1">
    <citation type="journal article" date="2009" name="Vaccine">
        <title>Whole genome sequence analysis of Mycobacterium bovis bacillus Calmette-Guerin (BCG) Tokyo 172: a comparative study of BCG vaccine substrains.</title>
        <authorList>
            <person name="Seki M."/>
            <person name="Honda I."/>
            <person name="Fujita I."/>
            <person name="Yano I."/>
            <person name="Yamamoto S."/>
            <person name="Koyama A."/>
        </authorList>
    </citation>
    <scope>NUCLEOTIDE SEQUENCE [LARGE SCALE GENOMIC DNA]</scope>
    <source>
        <strain>BCG / Tokyo 172 / ATCC 35737 / TMC 1019</strain>
    </source>
</reference>
<feature type="chain" id="PRO_1000184266" description="Urease accessory protein UreG">
    <location>
        <begin position="1"/>
        <end position="224"/>
    </location>
</feature>
<feature type="region of interest" description="Disordered" evidence="2">
    <location>
        <begin position="1"/>
        <end position="25"/>
    </location>
</feature>
<feature type="compositionally biased region" description="Basic residues" evidence="2">
    <location>
        <begin position="1"/>
        <end position="20"/>
    </location>
</feature>
<feature type="binding site" evidence="1">
    <location>
        <begin position="32"/>
        <end position="39"/>
    </location>
    <ligand>
        <name>GTP</name>
        <dbReference type="ChEBI" id="CHEBI:37565"/>
    </ligand>
</feature>
<dbReference type="EMBL" id="AP010918">
    <property type="protein sequence ID" value="BAH26158.1"/>
    <property type="molecule type" value="Genomic_DNA"/>
</dbReference>
<dbReference type="RefSeq" id="WP_003409313.1">
    <property type="nucleotide sequence ID" value="NZ_CP014566.1"/>
</dbReference>
<dbReference type="SMR" id="C1APC9"/>
<dbReference type="KEGG" id="mbt:JTY_1872"/>
<dbReference type="HOGENOM" id="CLU_072144_1_0_11"/>
<dbReference type="GO" id="GO:0005737">
    <property type="term" value="C:cytoplasm"/>
    <property type="evidence" value="ECO:0007669"/>
    <property type="project" value="UniProtKB-SubCell"/>
</dbReference>
<dbReference type="GO" id="GO:0005525">
    <property type="term" value="F:GTP binding"/>
    <property type="evidence" value="ECO:0007669"/>
    <property type="project" value="UniProtKB-KW"/>
</dbReference>
<dbReference type="GO" id="GO:0003924">
    <property type="term" value="F:GTPase activity"/>
    <property type="evidence" value="ECO:0007669"/>
    <property type="project" value="InterPro"/>
</dbReference>
<dbReference type="GO" id="GO:0016151">
    <property type="term" value="F:nickel cation binding"/>
    <property type="evidence" value="ECO:0007669"/>
    <property type="project" value="UniProtKB-UniRule"/>
</dbReference>
<dbReference type="GO" id="GO:0043419">
    <property type="term" value="P:urea catabolic process"/>
    <property type="evidence" value="ECO:0007669"/>
    <property type="project" value="InterPro"/>
</dbReference>
<dbReference type="CDD" id="cd05540">
    <property type="entry name" value="UreG"/>
    <property type="match status" value="1"/>
</dbReference>
<dbReference type="FunFam" id="3.40.50.300:FF:000208">
    <property type="entry name" value="Urease accessory protein UreG"/>
    <property type="match status" value="1"/>
</dbReference>
<dbReference type="Gene3D" id="3.40.50.300">
    <property type="entry name" value="P-loop containing nucleotide triphosphate hydrolases"/>
    <property type="match status" value="1"/>
</dbReference>
<dbReference type="HAMAP" id="MF_01389">
    <property type="entry name" value="UreG"/>
    <property type="match status" value="1"/>
</dbReference>
<dbReference type="InterPro" id="IPR003495">
    <property type="entry name" value="CobW/HypB/UreG_nucleotide-bd"/>
</dbReference>
<dbReference type="InterPro" id="IPR027417">
    <property type="entry name" value="P-loop_NTPase"/>
</dbReference>
<dbReference type="InterPro" id="IPR004400">
    <property type="entry name" value="UreG"/>
</dbReference>
<dbReference type="NCBIfam" id="TIGR00101">
    <property type="entry name" value="ureG"/>
    <property type="match status" value="1"/>
</dbReference>
<dbReference type="PANTHER" id="PTHR31715">
    <property type="entry name" value="UREASE ACCESSORY PROTEIN G"/>
    <property type="match status" value="1"/>
</dbReference>
<dbReference type="PANTHER" id="PTHR31715:SF0">
    <property type="entry name" value="UREASE ACCESSORY PROTEIN G"/>
    <property type="match status" value="1"/>
</dbReference>
<dbReference type="Pfam" id="PF02492">
    <property type="entry name" value="cobW"/>
    <property type="match status" value="1"/>
</dbReference>
<dbReference type="PIRSF" id="PIRSF005624">
    <property type="entry name" value="Ni-bind_GTPase"/>
    <property type="match status" value="1"/>
</dbReference>
<dbReference type="SUPFAM" id="SSF52540">
    <property type="entry name" value="P-loop containing nucleoside triphosphate hydrolases"/>
    <property type="match status" value="1"/>
</dbReference>
<sequence>MATHSHPHSHTVPARPRRVRKPGEPLRIGVGGPVGSGKTALVAALCRQLRGELSLAVLTNDIYTTEDADFLRTHAVLPDDRIAAVQTGGCPHTAIRDDITANLDAIDELMAAHDALDLILVESGGDNLTATFSSGLVDAQIFVIDVAGGDKVPRKGGPGVTYSDLLVVNKTDLAALVGADLAVMARDADAVRDGRPTVLQSLTEDPAASDVVAWVRSQLAADGV</sequence>
<organism>
    <name type="scientific">Mycobacterium bovis (strain BCG / Tokyo 172 / ATCC 35737 / TMC 1019)</name>
    <dbReference type="NCBI Taxonomy" id="561275"/>
    <lineage>
        <taxon>Bacteria</taxon>
        <taxon>Bacillati</taxon>
        <taxon>Actinomycetota</taxon>
        <taxon>Actinomycetes</taxon>
        <taxon>Mycobacteriales</taxon>
        <taxon>Mycobacteriaceae</taxon>
        <taxon>Mycobacterium</taxon>
        <taxon>Mycobacterium tuberculosis complex</taxon>
    </lineage>
</organism>
<protein>
    <recommendedName>
        <fullName evidence="1">Urease accessory protein UreG</fullName>
    </recommendedName>
</protein>
<gene>
    <name evidence="1" type="primary">ureG</name>
    <name type="ordered locus">JTY_1872</name>
</gene>
<proteinExistence type="inferred from homology"/>
<keyword id="KW-0143">Chaperone</keyword>
<keyword id="KW-0963">Cytoplasm</keyword>
<keyword id="KW-0342">GTP-binding</keyword>
<keyword id="KW-0996">Nickel insertion</keyword>
<keyword id="KW-0547">Nucleotide-binding</keyword>